<keyword id="KW-0175">Coiled coil</keyword>
<keyword id="KW-0903">Direct protein sequencing</keyword>
<keyword id="KW-0597">Phosphoprotein</keyword>
<keyword id="KW-1185">Reference proteome</keyword>
<name>CDR2_MOUSE</name>
<reference key="1">
    <citation type="journal article" date="1997" name="J. Neurosci.">
        <title>A post-transcriptional regulatory mechanism restricts expression of the paraneoplastic cerebellar degeneration antigen cdr2 to immune privileged tissues.</title>
        <authorList>
            <person name="Corradi J.P."/>
            <person name="Yang C."/>
            <person name="Darnell J.C."/>
            <person name="Dalmau J."/>
            <person name="Darnell R.B."/>
        </authorList>
    </citation>
    <scope>NUCLEOTIDE SEQUENCE [MRNA]</scope>
    <scope>TISSUE SPECIFICITY</scope>
</reference>
<reference key="2">
    <citation type="journal article" date="2005" name="Science">
        <title>The transcriptional landscape of the mammalian genome.</title>
        <authorList>
            <person name="Carninci P."/>
            <person name="Kasukawa T."/>
            <person name="Katayama S."/>
            <person name="Gough J."/>
            <person name="Frith M.C."/>
            <person name="Maeda N."/>
            <person name="Oyama R."/>
            <person name="Ravasi T."/>
            <person name="Lenhard B."/>
            <person name="Wells C."/>
            <person name="Kodzius R."/>
            <person name="Shimokawa K."/>
            <person name="Bajic V.B."/>
            <person name="Brenner S.E."/>
            <person name="Batalov S."/>
            <person name="Forrest A.R."/>
            <person name="Zavolan M."/>
            <person name="Davis M.J."/>
            <person name="Wilming L.G."/>
            <person name="Aidinis V."/>
            <person name="Allen J.E."/>
            <person name="Ambesi-Impiombato A."/>
            <person name="Apweiler R."/>
            <person name="Aturaliya R.N."/>
            <person name="Bailey T.L."/>
            <person name="Bansal M."/>
            <person name="Baxter L."/>
            <person name="Beisel K.W."/>
            <person name="Bersano T."/>
            <person name="Bono H."/>
            <person name="Chalk A.M."/>
            <person name="Chiu K.P."/>
            <person name="Choudhary V."/>
            <person name="Christoffels A."/>
            <person name="Clutterbuck D.R."/>
            <person name="Crowe M.L."/>
            <person name="Dalla E."/>
            <person name="Dalrymple B.P."/>
            <person name="de Bono B."/>
            <person name="Della Gatta G."/>
            <person name="di Bernardo D."/>
            <person name="Down T."/>
            <person name="Engstrom P."/>
            <person name="Fagiolini M."/>
            <person name="Faulkner G."/>
            <person name="Fletcher C.F."/>
            <person name="Fukushima T."/>
            <person name="Furuno M."/>
            <person name="Futaki S."/>
            <person name="Gariboldi M."/>
            <person name="Georgii-Hemming P."/>
            <person name="Gingeras T.R."/>
            <person name="Gojobori T."/>
            <person name="Green R.E."/>
            <person name="Gustincich S."/>
            <person name="Harbers M."/>
            <person name="Hayashi Y."/>
            <person name="Hensch T.K."/>
            <person name="Hirokawa N."/>
            <person name="Hill D."/>
            <person name="Huminiecki L."/>
            <person name="Iacono M."/>
            <person name="Ikeo K."/>
            <person name="Iwama A."/>
            <person name="Ishikawa T."/>
            <person name="Jakt M."/>
            <person name="Kanapin A."/>
            <person name="Katoh M."/>
            <person name="Kawasawa Y."/>
            <person name="Kelso J."/>
            <person name="Kitamura H."/>
            <person name="Kitano H."/>
            <person name="Kollias G."/>
            <person name="Krishnan S.P."/>
            <person name="Kruger A."/>
            <person name="Kummerfeld S.K."/>
            <person name="Kurochkin I.V."/>
            <person name="Lareau L.F."/>
            <person name="Lazarevic D."/>
            <person name="Lipovich L."/>
            <person name="Liu J."/>
            <person name="Liuni S."/>
            <person name="McWilliam S."/>
            <person name="Madan Babu M."/>
            <person name="Madera M."/>
            <person name="Marchionni L."/>
            <person name="Matsuda H."/>
            <person name="Matsuzawa S."/>
            <person name="Miki H."/>
            <person name="Mignone F."/>
            <person name="Miyake S."/>
            <person name="Morris K."/>
            <person name="Mottagui-Tabar S."/>
            <person name="Mulder N."/>
            <person name="Nakano N."/>
            <person name="Nakauchi H."/>
            <person name="Ng P."/>
            <person name="Nilsson R."/>
            <person name="Nishiguchi S."/>
            <person name="Nishikawa S."/>
            <person name="Nori F."/>
            <person name="Ohara O."/>
            <person name="Okazaki Y."/>
            <person name="Orlando V."/>
            <person name="Pang K.C."/>
            <person name="Pavan W.J."/>
            <person name="Pavesi G."/>
            <person name="Pesole G."/>
            <person name="Petrovsky N."/>
            <person name="Piazza S."/>
            <person name="Reed J."/>
            <person name="Reid J.F."/>
            <person name="Ring B.Z."/>
            <person name="Ringwald M."/>
            <person name="Rost B."/>
            <person name="Ruan Y."/>
            <person name="Salzberg S.L."/>
            <person name="Sandelin A."/>
            <person name="Schneider C."/>
            <person name="Schoenbach C."/>
            <person name="Sekiguchi K."/>
            <person name="Semple C.A."/>
            <person name="Seno S."/>
            <person name="Sessa L."/>
            <person name="Sheng Y."/>
            <person name="Shibata Y."/>
            <person name="Shimada H."/>
            <person name="Shimada K."/>
            <person name="Silva D."/>
            <person name="Sinclair B."/>
            <person name="Sperling S."/>
            <person name="Stupka E."/>
            <person name="Sugiura K."/>
            <person name="Sultana R."/>
            <person name="Takenaka Y."/>
            <person name="Taki K."/>
            <person name="Tammoja K."/>
            <person name="Tan S.L."/>
            <person name="Tang S."/>
            <person name="Taylor M.S."/>
            <person name="Tegner J."/>
            <person name="Teichmann S.A."/>
            <person name="Ueda H.R."/>
            <person name="van Nimwegen E."/>
            <person name="Verardo R."/>
            <person name="Wei C.L."/>
            <person name="Yagi K."/>
            <person name="Yamanishi H."/>
            <person name="Zabarovsky E."/>
            <person name="Zhu S."/>
            <person name="Zimmer A."/>
            <person name="Hide W."/>
            <person name="Bult C."/>
            <person name="Grimmond S.M."/>
            <person name="Teasdale R.D."/>
            <person name="Liu E.T."/>
            <person name="Brusic V."/>
            <person name="Quackenbush J."/>
            <person name="Wahlestedt C."/>
            <person name="Mattick J.S."/>
            <person name="Hume D.A."/>
            <person name="Kai C."/>
            <person name="Sasaki D."/>
            <person name="Tomaru Y."/>
            <person name="Fukuda S."/>
            <person name="Kanamori-Katayama M."/>
            <person name="Suzuki M."/>
            <person name="Aoki J."/>
            <person name="Arakawa T."/>
            <person name="Iida J."/>
            <person name="Imamura K."/>
            <person name="Itoh M."/>
            <person name="Kato T."/>
            <person name="Kawaji H."/>
            <person name="Kawagashira N."/>
            <person name="Kawashima T."/>
            <person name="Kojima M."/>
            <person name="Kondo S."/>
            <person name="Konno H."/>
            <person name="Nakano K."/>
            <person name="Ninomiya N."/>
            <person name="Nishio T."/>
            <person name="Okada M."/>
            <person name="Plessy C."/>
            <person name="Shibata K."/>
            <person name="Shiraki T."/>
            <person name="Suzuki S."/>
            <person name="Tagami M."/>
            <person name="Waki K."/>
            <person name="Watahiki A."/>
            <person name="Okamura-Oho Y."/>
            <person name="Suzuki H."/>
            <person name="Kawai J."/>
            <person name="Hayashizaki Y."/>
        </authorList>
    </citation>
    <scope>NUCLEOTIDE SEQUENCE [LARGE SCALE MRNA]</scope>
    <source>
        <strain>C57BL/6J</strain>
    </source>
</reference>
<reference key="3">
    <citation type="journal article" date="2004" name="Genome Res.">
        <title>The status, quality, and expansion of the NIH full-length cDNA project: the Mammalian Gene Collection (MGC).</title>
        <authorList>
            <consortium name="The MGC Project Team"/>
        </authorList>
    </citation>
    <scope>NUCLEOTIDE SEQUENCE [LARGE SCALE MRNA]</scope>
</reference>
<reference key="4">
    <citation type="submission" date="2009-01" db="UniProtKB">
        <authorList>
            <person name="Lubec G."/>
            <person name="Sunyer B."/>
            <person name="Chen W.-Q."/>
        </authorList>
    </citation>
    <scope>PROTEIN SEQUENCE OF 334-340</scope>
    <scope>IDENTIFICATION BY MASS SPECTROMETRY</scope>
    <source>
        <strain>OF1</strain>
        <tissue>Hippocampus</tissue>
    </source>
</reference>
<reference key="5">
    <citation type="journal article" date="2004" name="Mol. Cell. Proteomics">
        <title>Phosphoproteomic analysis of the developing mouse brain.</title>
        <authorList>
            <person name="Ballif B.A."/>
            <person name="Villen J."/>
            <person name="Beausoleil S.A."/>
            <person name="Schwartz D."/>
            <person name="Gygi S.P."/>
        </authorList>
    </citation>
    <scope>IDENTIFICATION BY MASS SPECTROMETRY [LARGE SCALE ANALYSIS]</scope>
    <source>
        <tissue>Embryonic brain</tissue>
    </source>
</reference>
<reference key="6">
    <citation type="journal article" date="2010" name="Cell">
        <title>A tissue-specific atlas of mouse protein phosphorylation and expression.</title>
        <authorList>
            <person name="Huttlin E.L."/>
            <person name="Jedrychowski M.P."/>
            <person name="Elias J.E."/>
            <person name="Goswami T."/>
            <person name="Rad R."/>
            <person name="Beausoleil S.A."/>
            <person name="Villen J."/>
            <person name="Haas W."/>
            <person name="Sowa M.E."/>
            <person name="Gygi S.P."/>
        </authorList>
    </citation>
    <scope>IDENTIFICATION BY MASS SPECTROMETRY [LARGE SCALE ANALYSIS]</scope>
    <source>
        <tissue>Kidney</tissue>
        <tissue>Spleen</tissue>
    </source>
</reference>
<accession>P97817</accession>
<accession>Q3UG92</accession>
<dbReference type="EMBL" id="U88588">
    <property type="protein sequence ID" value="AAC53052.1"/>
    <property type="molecule type" value="mRNA"/>
</dbReference>
<dbReference type="EMBL" id="AK148057">
    <property type="protein sequence ID" value="BAE28317.1"/>
    <property type="molecule type" value="mRNA"/>
</dbReference>
<dbReference type="EMBL" id="BC117530">
    <property type="protein sequence ID" value="AAI17531.1"/>
    <property type="molecule type" value="mRNA"/>
</dbReference>
<dbReference type="EMBL" id="BC118511">
    <property type="protein sequence ID" value="AAI18512.1"/>
    <property type="molecule type" value="mRNA"/>
</dbReference>
<dbReference type="CCDS" id="CCDS21798.1"/>
<dbReference type="RefSeq" id="NP_031698.2">
    <property type="nucleotide sequence ID" value="NM_007672.2"/>
</dbReference>
<dbReference type="SMR" id="P97817"/>
<dbReference type="BioGRID" id="198660">
    <property type="interactions" value="1"/>
</dbReference>
<dbReference type="FunCoup" id="P97817">
    <property type="interactions" value="617"/>
</dbReference>
<dbReference type="STRING" id="10090.ENSMUSP00000033169"/>
<dbReference type="GlyGen" id="P97817">
    <property type="glycosylation" value="1 site"/>
</dbReference>
<dbReference type="iPTMnet" id="P97817"/>
<dbReference type="PhosphoSitePlus" id="P97817"/>
<dbReference type="jPOST" id="P97817"/>
<dbReference type="PaxDb" id="10090-ENSMUSP00000033169"/>
<dbReference type="PeptideAtlas" id="P97817"/>
<dbReference type="ProteomicsDB" id="283869"/>
<dbReference type="Pumba" id="P97817"/>
<dbReference type="Antibodypedia" id="12516">
    <property type="antibodies" value="387 antibodies from 29 providers"/>
</dbReference>
<dbReference type="Ensembl" id="ENSMUST00000033169.9">
    <property type="protein sequence ID" value="ENSMUSP00000033169.9"/>
    <property type="gene ID" value="ENSMUSG00000030878.12"/>
</dbReference>
<dbReference type="GeneID" id="12585"/>
<dbReference type="KEGG" id="mmu:12585"/>
<dbReference type="UCSC" id="uc012ftc.2">
    <property type="organism name" value="mouse"/>
</dbReference>
<dbReference type="AGR" id="MGI:1100885"/>
<dbReference type="CTD" id="1039"/>
<dbReference type="MGI" id="MGI:1100885">
    <property type="gene designation" value="Cdr2"/>
</dbReference>
<dbReference type="VEuPathDB" id="HostDB:ENSMUSG00000030878"/>
<dbReference type="eggNOG" id="ENOG502QUPP">
    <property type="taxonomic scope" value="Eukaryota"/>
</dbReference>
<dbReference type="GeneTree" id="ENSGT00390000018570"/>
<dbReference type="HOGENOM" id="CLU_048751_0_0_1"/>
<dbReference type="InParanoid" id="P97817"/>
<dbReference type="OMA" id="GCRARQK"/>
<dbReference type="OrthoDB" id="10059415at2759"/>
<dbReference type="TreeFam" id="TF326183"/>
<dbReference type="BioGRID-ORCS" id="12585">
    <property type="hits" value="2 hits in 76 CRISPR screens"/>
</dbReference>
<dbReference type="PRO" id="PR:P97817"/>
<dbReference type="Proteomes" id="UP000000589">
    <property type="component" value="Chromosome 7"/>
</dbReference>
<dbReference type="RNAct" id="P97817">
    <property type="molecule type" value="protein"/>
</dbReference>
<dbReference type="Bgee" id="ENSMUSG00000030878">
    <property type="expression patterns" value="Expressed in blood and 247 other cell types or tissues"/>
</dbReference>
<dbReference type="ExpressionAtlas" id="P97817">
    <property type="expression patterns" value="baseline and differential"/>
</dbReference>
<dbReference type="GO" id="GO:0005737">
    <property type="term" value="C:cytoplasm"/>
    <property type="evidence" value="ECO:0000314"/>
    <property type="project" value="MGI"/>
</dbReference>
<dbReference type="InterPro" id="IPR026079">
    <property type="entry name" value="CDR2"/>
</dbReference>
<dbReference type="PANTHER" id="PTHR19232">
    <property type="entry name" value="CENTROCORTIN FAMILY MEMBER"/>
    <property type="match status" value="1"/>
</dbReference>
<dbReference type="PANTHER" id="PTHR19232:SF1">
    <property type="entry name" value="CEREBELLAR DEGENERATION-RELATED PROTEIN 2"/>
    <property type="match status" value="1"/>
</dbReference>
<proteinExistence type="evidence at protein level"/>
<gene>
    <name type="primary">Cdr2</name>
</gene>
<feature type="chain" id="PRO_0000089457" description="Cerebellar degeneration-related protein 2">
    <location>
        <begin position="1"/>
        <end position="455"/>
    </location>
</feature>
<feature type="region of interest" description="Disordered" evidence="3">
    <location>
        <begin position="132"/>
        <end position="152"/>
    </location>
</feature>
<feature type="region of interest" description="Disordered" evidence="3">
    <location>
        <begin position="395"/>
        <end position="419"/>
    </location>
</feature>
<feature type="coiled-coil region" evidence="2">
    <location>
        <begin position="37"/>
        <end position="141"/>
    </location>
</feature>
<feature type="coiled-coil region" evidence="2">
    <location>
        <begin position="191"/>
        <end position="264"/>
    </location>
</feature>
<feature type="compositionally biased region" description="Polar residues" evidence="3">
    <location>
        <begin position="132"/>
        <end position="142"/>
    </location>
</feature>
<feature type="compositionally biased region" description="Low complexity" evidence="3">
    <location>
        <begin position="403"/>
        <end position="419"/>
    </location>
</feature>
<feature type="modified residue" description="Phosphoserine" evidence="1">
    <location>
        <position position="310"/>
    </location>
</feature>
<feature type="sequence conflict" description="In Ref. 1; AAC53052." evidence="5" ref="1">
    <original>QQ</original>
    <variation>HE</variation>
    <location>
        <begin position="367"/>
        <end position="368"/>
    </location>
</feature>
<organism>
    <name type="scientific">Mus musculus</name>
    <name type="common">Mouse</name>
    <dbReference type="NCBI Taxonomy" id="10090"/>
    <lineage>
        <taxon>Eukaryota</taxon>
        <taxon>Metazoa</taxon>
        <taxon>Chordata</taxon>
        <taxon>Craniata</taxon>
        <taxon>Vertebrata</taxon>
        <taxon>Euteleostomi</taxon>
        <taxon>Mammalia</taxon>
        <taxon>Eutheria</taxon>
        <taxon>Euarchontoglires</taxon>
        <taxon>Glires</taxon>
        <taxon>Rodentia</taxon>
        <taxon>Myomorpha</taxon>
        <taxon>Muroidea</taxon>
        <taxon>Muridae</taxon>
        <taxon>Murinae</taxon>
        <taxon>Mus</taxon>
        <taxon>Mus</taxon>
    </lineage>
</organism>
<protein>
    <recommendedName>
        <fullName>Cerebellar degeneration-related protein 2</fullName>
    </recommendedName>
</protein>
<comment type="tissue specificity">
    <text evidence="4">Expressed in brain and testis (at protein level). Expressed in the cerebellum, cerebral cortex, heart, lung, spleen, ovary, kidney and testis.</text>
</comment>
<comment type="similarity">
    <text evidence="5">Belongs to the CDR2 family.</text>
</comment>
<evidence type="ECO:0000250" key="1">
    <source>
        <dbReference type="UniProtKB" id="Q01850"/>
    </source>
</evidence>
<evidence type="ECO:0000255" key="2"/>
<evidence type="ECO:0000256" key="3">
    <source>
        <dbReference type="SAM" id="MobiDB-lite"/>
    </source>
</evidence>
<evidence type="ECO:0000269" key="4">
    <source>
    </source>
</evidence>
<evidence type="ECO:0000305" key="5"/>
<sequence>MLADNLVEEFEMEDEPWYDHRDLQQDLQLAAELGKTLLDRNTELEDSLQQMYTTNQEQLQEIEYLTKQVELLRQMNEQHAKVYEQLDVTARELEETNQKLVAESKASQQKILSLTETIECLQTNIDHLQSQVEELKSSSQGRGRQKACDQEKPAPSFSCLKELYDLRQHFVYDHVFAEKITSLQSQQSPDEEENEHLKKAVTMLQAQLSLERKKRVSVEAEYKVVLKENSELEQQLGATDAYRARALELEAEVAEMRQMLQAEHPFVNGVEKLVPDSLFVPFKEPSQSLLEEMFLAAPEAPRKPLKRSSSETALSSLAGDDIVKDHEDTCIRRAKAVKQRGISLLHEVDTQYSALKVKYEELLKKCQQEQDSLSHKAVQTSRLLTRDLTGLVTQSEAGASGWEPTPVSPESISSPTTTPPEYKALFKEIFSCIKKTKQEIDEQRTKYPSLSSYSY</sequence>